<accession>D3YX43</accession>
<feature type="signal peptide" evidence="1">
    <location>
        <begin position="1"/>
        <end position="20"/>
    </location>
</feature>
<feature type="chain" id="PRO_0000395114" description="V-set and immunoglobulin domain-containing protein 10">
    <location>
        <begin position="21"/>
        <end position="558"/>
    </location>
</feature>
<feature type="topological domain" description="Extracellular" evidence="1">
    <location>
        <begin position="21"/>
        <end position="426"/>
    </location>
</feature>
<feature type="transmembrane region" description="Helical" evidence="1">
    <location>
        <begin position="427"/>
        <end position="447"/>
    </location>
</feature>
<feature type="topological domain" description="Cytoplasmic" evidence="1">
    <location>
        <begin position="448"/>
        <end position="558"/>
    </location>
</feature>
<feature type="domain" description="Ig-like C2-type 1">
    <location>
        <begin position="37"/>
        <end position="140"/>
    </location>
</feature>
<feature type="domain" description="Ig-like C2-type 2">
    <location>
        <begin position="144"/>
        <end position="235"/>
    </location>
</feature>
<feature type="domain" description="Ig-like C2-type 3">
    <location>
        <begin position="248"/>
        <end position="327"/>
    </location>
</feature>
<feature type="domain" description="Ig-like C2-type 4">
    <location>
        <begin position="332"/>
        <end position="420"/>
    </location>
</feature>
<feature type="region of interest" description="Disordered" evidence="3">
    <location>
        <begin position="477"/>
        <end position="515"/>
    </location>
</feature>
<feature type="region of interest" description="Disordered" evidence="3">
    <location>
        <begin position="532"/>
        <end position="558"/>
    </location>
</feature>
<feature type="compositionally biased region" description="Acidic residues" evidence="3">
    <location>
        <begin position="477"/>
        <end position="506"/>
    </location>
</feature>
<feature type="glycosylation site" description="N-linked (GlcNAc...) asparagine" evidence="1">
    <location>
        <position position="32"/>
    </location>
</feature>
<feature type="glycosylation site" description="N-linked (GlcNAc...) asparagine" evidence="1">
    <location>
        <position position="60"/>
    </location>
</feature>
<feature type="glycosylation site" description="N-linked (GlcNAc...) asparagine" evidence="1">
    <location>
        <position position="121"/>
    </location>
</feature>
<feature type="glycosylation site" description="N-linked (GlcNAc...) asparagine" evidence="1">
    <location>
        <position position="150"/>
    </location>
</feature>
<feature type="glycosylation site" description="N-linked (GlcNAc...) asparagine" evidence="1">
    <location>
        <position position="159"/>
    </location>
</feature>
<feature type="glycosylation site" description="N-linked (GlcNAc...) asparagine" evidence="1">
    <location>
        <position position="218"/>
    </location>
</feature>
<feature type="glycosylation site" description="N-linked (GlcNAc...) asparagine" evidence="1">
    <location>
        <position position="344"/>
    </location>
</feature>
<feature type="disulfide bond" evidence="2">
    <location>
        <begin position="65"/>
        <end position="124"/>
    </location>
</feature>
<feature type="disulfide bond" evidence="2">
    <location>
        <begin position="174"/>
        <end position="221"/>
    </location>
</feature>
<feature type="disulfide bond" evidence="2">
    <location>
        <begin position="265"/>
        <end position="308"/>
    </location>
</feature>
<feature type="disulfide bond" evidence="2">
    <location>
        <begin position="349"/>
        <end position="404"/>
    </location>
</feature>
<dbReference type="EMBL" id="AC110234">
    <property type="status" value="NOT_ANNOTATED_CDS"/>
    <property type="molecule type" value="Genomic_DNA"/>
</dbReference>
<dbReference type="CCDS" id="CCDS19603.2"/>
<dbReference type="RefSeq" id="NP_001028483.2">
    <property type="nucleotide sequence ID" value="NM_001033311.3"/>
</dbReference>
<dbReference type="FunCoup" id="D3YX43">
    <property type="interactions" value="413"/>
</dbReference>
<dbReference type="STRING" id="10090.ENSMUSP00000107598"/>
<dbReference type="GlyCosmos" id="D3YX43">
    <property type="glycosylation" value="7 sites, No reported glycans"/>
</dbReference>
<dbReference type="GlyGen" id="D3YX43">
    <property type="glycosylation" value="8 sites, 4 N-linked glycans (4 sites)"/>
</dbReference>
<dbReference type="PhosphoSitePlus" id="D3YX43"/>
<dbReference type="PaxDb" id="10090-ENSMUSP00000107598"/>
<dbReference type="PeptideAtlas" id="D3YX43"/>
<dbReference type="ProteomicsDB" id="275191"/>
<dbReference type="Pumba" id="D3YX43"/>
<dbReference type="Antibodypedia" id="3044">
    <property type="antibodies" value="32 antibodies from 15 providers"/>
</dbReference>
<dbReference type="Ensembl" id="ENSMUST00000111967.8">
    <property type="protein sequence ID" value="ENSMUSP00000107598.2"/>
    <property type="gene ID" value="ENSMUSG00000066894.15"/>
</dbReference>
<dbReference type="GeneID" id="231668"/>
<dbReference type="KEGG" id="mmu:231668"/>
<dbReference type="UCSC" id="uc008zfn.1">
    <property type="organism name" value="mouse"/>
</dbReference>
<dbReference type="AGR" id="MGI:2448533"/>
<dbReference type="CTD" id="54621"/>
<dbReference type="MGI" id="MGI:2448533">
    <property type="gene designation" value="Vsig10"/>
</dbReference>
<dbReference type="VEuPathDB" id="HostDB:ENSMUSG00000066894"/>
<dbReference type="eggNOG" id="ENOG502R53I">
    <property type="taxonomic scope" value="Eukaryota"/>
</dbReference>
<dbReference type="GeneTree" id="ENSGT00940000159876"/>
<dbReference type="InParanoid" id="D3YX43"/>
<dbReference type="OMA" id="QCWAEMS"/>
<dbReference type="OrthoDB" id="9043395at2759"/>
<dbReference type="PhylomeDB" id="D3YX43"/>
<dbReference type="TreeFam" id="TF334050"/>
<dbReference type="BioGRID-ORCS" id="231668">
    <property type="hits" value="3 hits in 79 CRISPR screens"/>
</dbReference>
<dbReference type="ChiTaRS" id="Vsig10">
    <property type="organism name" value="mouse"/>
</dbReference>
<dbReference type="PRO" id="PR:D3YX43"/>
<dbReference type="Proteomes" id="UP000000589">
    <property type="component" value="Chromosome 5"/>
</dbReference>
<dbReference type="RNAct" id="D3YX43">
    <property type="molecule type" value="protein"/>
</dbReference>
<dbReference type="Bgee" id="ENSMUSG00000066894">
    <property type="expression patterns" value="Expressed in left colon and 144 other cell types or tissues"/>
</dbReference>
<dbReference type="ExpressionAtlas" id="D3YX43">
    <property type="expression patterns" value="baseline and differential"/>
</dbReference>
<dbReference type="GO" id="GO:0016020">
    <property type="term" value="C:membrane"/>
    <property type="evidence" value="ECO:0007669"/>
    <property type="project" value="UniProtKB-SubCell"/>
</dbReference>
<dbReference type="GO" id="GO:0043005">
    <property type="term" value="C:neuron projection"/>
    <property type="evidence" value="ECO:0007669"/>
    <property type="project" value="UniProtKB-ARBA"/>
</dbReference>
<dbReference type="CDD" id="cd00096">
    <property type="entry name" value="Ig"/>
    <property type="match status" value="2"/>
</dbReference>
<dbReference type="Gene3D" id="2.60.40.10">
    <property type="entry name" value="Immunoglobulins"/>
    <property type="match status" value="3"/>
</dbReference>
<dbReference type="InterPro" id="IPR007110">
    <property type="entry name" value="Ig-like_dom"/>
</dbReference>
<dbReference type="InterPro" id="IPR036179">
    <property type="entry name" value="Ig-like_dom_sf"/>
</dbReference>
<dbReference type="InterPro" id="IPR013783">
    <property type="entry name" value="Ig-like_fold"/>
</dbReference>
<dbReference type="InterPro" id="IPR003599">
    <property type="entry name" value="Ig_sub"/>
</dbReference>
<dbReference type="InterPro" id="IPR003598">
    <property type="entry name" value="Ig_sub2"/>
</dbReference>
<dbReference type="InterPro" id="IPR013106">
    <property type="entry name" value="Ig_V-set"/>
</dbReference>
<dbReference type="InterPro" id="IPR051170">
    <property type="entry name" value="Neural/epithelial_adhesion"/>
</dbReference>
<dbReference type="PANTHER" id="PTHR12231">
    <property type="entry name" value="CTX-RELATED TYPE I TRANSMEMBRANE PROTEIN"/>
    <property type="match status" value="1"/>
</dbReference>
<dbReference type="PANTHER" id="PTHR12231:SF253">
    <property type="entry name" value="DPR-INTERACTING PROTEIN ETA, ISOFORM B-RELATED"/>
    <property type="match status" value="1"/>
</dbReference>
<dbReference type="Pfam" id="PF13927">
    <property type="entry name" value="Ig_3"/>
    <property type="match status" value="3"/>
</dbReference>
<dbReference type="SMART" id="SM00409">
    <property type="entry name" value="IG"/>
    <property type="match status" value="3"/>
</dbReference>
<dbReference type="SMART" id="SM00408">
    <property type="entry name" value="IGc2"/>
    <property type="match status" value="3"/>
</dbReference>
<dbReference type="SMART" id="SM00406">
    <property type="entry name" value="IGv"/>
    <property type="match status" value="2"/>
</dbReference>
<dbReference type="SUPFAM" id="SSF48726">
    <property type="entry name" value="Immunoglobulin"/>
    <property type="match status" value="4"/>
</dbReference>
<dbReference type="PROSITE" id="PS50835">
    <property type="entry name" value="IG_LIKE"/>
    <property type="match status" value="4"/>
</dbReference>
<reference key="1">
    <citation type="journal article" date="2009" name="PLoS Biol.">
        <title>Lineage-specific biology revealed by a finished genome assembly of the mouse.</title>
        <authorList>
            <person name="Church D.M."/>
            <person name="Goodstadt L."/>
            <person name="Hillier L.W."/>
            <person name="Zody M.C."/>
            <person name="Goldstein S."/>
            <person name="She X."/>
            <person name="Bult C.J."/>
            <person name="Agarwala R."/>
            <person name="Cherry J.L."/>
            <person name="DiCuccio M."/>
            <person name="Hlavina W."/>
            <person name="Kapustin Y."/>
            <person name="Meric P."/>
            <person name="Maglott D."/>
            <person name="Birtle Z."/>
            <person name="Marques A.C."/>
            <person name="Graves T."/>
            <person name="Zhou S."/>
            <person name="Teague B."/>
            <person name="Potamousis K."/>
            <person name="Churas C."/>
            <person name="Place M."/>
            <person name="Herschleb J."/>
            <person name="Runnheim R."/>
            <person name="Forrest D."/>
            <person name="Amos-Landgraf J."/>
            <person name="Schwartz D.C."/>
            <person name="Cheng Z."/>
            <person name="Lindblad-Toh K."/>
            <person name="Eichler E.E."/>
            <person name="Ponting C.P."/>
        </authorList>
    </citation>
    <scope>NUCLEOTIDE SEQUENCE [LARGE SCALE GENOMIC DNA]</scope>
    <source>
        <strain>C57BL/6J</strain>
    </source>
</reference>
<keyword id="KW-1015">Disulfide bond</keyword>
<keyword id="KW-0325">Glycoprotein</keyword>
<keyword id="KW-0393">Immunoglobulin domain</keyword>
<keyword id="KW-0472">Membrane</keyword>
<keyword id="KW-1185">Reference proteome</keyword>
<keyword id="KW-0677">Repeat</keyword>
<keyword id="KW-0732">Signal</keyword>
<keyword id="KW-0812">Transmembrane</keyword>
<keyword id="KW-1133">Transmembrane helix</keyword>
<protein>
    <recommendedName>
        <fullName>V-set and immunoglobulin domain-containing protein 10</fullName>
    </recommendedName>
</protein>
<gene>
    <name type="primary">Vsig10</name>
</gene>
<evidence type="ECO:0000255" key="1"/>
<evidence type="ECO:0000255" key="2">
    <source>
        <dbReference type="PROSITE-ProRule" id="PRU00114"/>
    </source>
</evidence>
<evidence type="ECO:0000256" key="3">
    <source>
        <dbReference type="SAM" id="MobiDB-lite"/>
    </source>
</evidence>
<evidence type="ECO:0000305" key="4"/>
<comment type="subcellular location">
    <subcellularLocation>
        <location evidence="4">Membrane</location>
        <topology evidence="4">Single-pass type I membrane protein</topology>
    </subcellularLocation>
</comment>
<sequence>MAGLRVLLCLGALLARQGSAGLQLLLNPSRANLSVRPNSEVLPGIHPDLEAVAIGEVHDNVTLRCGSASGSRGLVTWYRNDSEPAFLVSFNSSLPPAAPRFSLEDAGALRIEALRLEDDGNYTCQEVLNETHWFPVRLRVASGPAYVEVNISATGTLPNGTLYAARGSQVDFNCCSAAQPPPEVEWWIQTHSIPEFLGKNLSANSFTLMLMSQNLQGNYTCSATNVLSGRQRKVTTELLVYWPPPSAPQCSVEVSSESTTLELACNWDGGYPDPTFLWTEEPGGTIMGNSKLQTLSPAQLLEGKKFKCVGNHILGPESGASCVVKLSSPLLPSQPMRTCFVGGNVTLTCEVSGANPPARIQWLRNLTQPAIQPSSHYIITQQGQSSSLTIHNCSQDLDEGFYYCQAENLVGVRATNIWLSVKEPLNIGGIVGTVVSLLLLGLAVVSGLTLYYSPAFWWKGGSTFRGQDMGDVMVLVDSEEEEEEEEEEEEKEDVAEEVEQETNETEELPKGISKHGHIHRVTALVNGNLDRMGNGFQEFQDDSDGQQSGIVQEDGKPV</sequence>
<proteinExistence type="inferred from homology"/>
<organism>
    <name type="scientific">Mus musculus</name>
    <name type="common">Mouse</name>
    <dbReference type="NCBI Taxonomy" id="10090"/>
    <lineage>
        <taxon>Eukaryota</taxon>
        <taxon>Metazoa</taxon>
        <taxon>Chordata</taxon>
        <taxon>Craniata</taxon>
        <taxon>Vertebrata</taxon>
        <taxon>Euteleostomi</taxon>
        <taxon>Mammalia</taxon>
        <taxon>Eutheria</taxon>
        <taxon>Euarchontoglires</taxon>
        <taxon>Glires</taxon>
        <taxon>Rodentia</taxon>
        <taxon>Myomorpha</taxon>
        <taxon>Muroidea</taxon>
        <taxon>Muridae</taxon>
        <taxon>Murinae</taxon>
        <taxon>Mus</taxon>
        <taxon>Mus</taxon>
    </lineage>
</organism>
<name>VSI10_MOUSE</name>